<comment type="function">
    <text evidence="1">Part of the ABC transporter complex BceAB (TC 3.A.1.123.5) involved in bacitracin export.</text>
</comment>
<comment type="subunit">
    <text evidence="3">The complex is composed of two ATP-binding proteins (BceA) and two transmembrane proteins (BceB).</text>
</comment>
<comment type="subcellular location">
    <subcellularLocation>
        <location evidence="3">Cell membrane</location>
        <topology evidence="3">Multi-pass membrane protein</topology>
    </subcellularLocation>
</comment>
<comment type="similarity">
    <text evidence="3">Belongs to the ABC-4 integral membrane protein family.</text>
</comment>
<comment type="sequence caution" evidence="3">
    <conflict type="frameshift">
        <sequence resource="EMBL-CDS" id="BAA75353"/>
    </conflict>
</comment>
<keyword id="KW-0046">Antibiotic resistance</keyword>
<keyword id="KW-1003">Cell membrane</keyword>
<keyword id="KW-0472">Membrane</keyword>
<keyword id="KW-1185">Reference proteome</keyword>
<keyword id="KW-0812">Transmembrane</keyword>
<keyword id="KW-1133">Transmembrane helix</keyword>
<keyword id="KW-0813">Transport</keyword>
<protein>
    <recommendedName>
        <fullName>Bacitracin export permease protein BceB</fullName>
    </recommendedName>
</protein>
<sequence length="648" mass="72436">MTINHLILQNLKKNLKNYYLYVFALMFSVALYFAFVTLQYDPAMDDVQEGIKGAAAMKTASVLLVVIVTTFLLYANNIFIKRRSKEIGLFQMIGMTKGKVFRILSAENLILYFGSLAGGVFIGFAISKVVTMILFKLTGLDRIATLSFSVPALVQTVIVFTLIYGLILLANYLFVKQQTILSLFHVTSSSEDRVKKVSLFDIIIGSLGIVSILVGYFVSSKLFGGTFTSMETLFIAMIFILGSVIIGTYFFYKGSVTFLFNLIRKKKNGHLAVRDVLSLSSIMFRMKSNALILTIITTISGLAIGLLSLSYISYYSAEKTAEHYVPSDFTLTDMEDAAYFKEALDAHGIAYDETVIDVLIAEVYVKDILEEPLDGVNFDSDIMILPVIRDTAVESVNVAPEEAAFTGYNDMMQQFMSLKDSGSIELRGKQKVIPQNYIGLHSEYLVSTYFSSGGLPLAIVNETTFSQLQDDINPEIQLDSSVHIGIDIKDARQLQEAVVLFHETPFTSETPQYAQVEMSQSQKQTFGLAMFIVGFLGLTFLITSGCILYFKQMDESEEEKGSYTILRKLGFTQGDLLKGIRVKQVFNFGIPLLLGLSHSYFAVKSGWFFFGNELWTPMIMVMLLYTALYSIFAILSVLYYKKVIKDAL</sequence>
<proteinExistence type="inferred from homology"/>
<gene>
    <name type="primary">bceB</name>
    <name type="ordered locus">BH3914</name>
</gene>
<evidence type="ECO:0000250" key="1"/>
<evidence type="ECO:0000255" key="2"/>
<evidence type="ECO:0000305" key="3"/>
<feature type="chain" id="PRO_0000064867" description="Bacitracin export permease protein BceB">
    <location>
        <begin position="1"/>
        <end position="648"/>
    </location>
</feature>
<feature type="transmembrane region" description="Helical" evidence="2">
    <location>
        <begin position="18"/>
        <end position="38"/>
    </location>
</feature>
<feature type="transmembrane region" description="Helical" evidence="2">
    <location>
        <begin position="60"/>
        <end position="80"/>
    </location>
</feature>
<feature type="transmembrane region" description="Helical" evidence="2">
    <location>
        <begin position="110"/>
        <end position="130"/>
    </location>
</feature>
<feature type="transmembrane region" description="Helical" evidence="2">
    <location>
        <begin position="150"/>
        <end position="170"/>
    </location>
</feature>
<feature type="transmembrane region" description="Helical" evidence="2">
    <location>
        <begin position="199"/>
        <end position="219"/>
    </location>
</feature>
<feature type="transmembrane region" description="Helical" evidence="2">
    <location>
        <begin position="232"/>
        <end position="252"/>
    </location>
</feature>
<feature type="transmembrane region" description="Helical" evidence="2">
    <location>
        <begin position="290"/>
        <end position="310"/>
    </location>
</feature>
<feature type="transmembrane region" description="Helical" evidence="2">
    <location>
        <begin position="528"/>
        <end position="548"/>
    </location>
</feature>
<feature type="transmembrane region" description="Helical" evidence="2">
    <location>
        <begin position="590"/>
        <end position="610"/>
    </location>
</feature>
<feature type="transmembrane region" description="Helical" evidence="2">
    <location>
        <begin position="618"/>
        <end position="638"/>
    </location>
</feature>
<reference key="1">
    <citation type="journal article" date="1999" name="Extremophiles">
        <title>Sequencing of three lambda clones from the genome of alkaliphilic Bacillus sp. strain C-125.</title>
        <authorList>
            <person name="Takami H."/>
            <person name="Nakasone K."/>
            <person name="Ogasawara N."/>
            <person name="Hirama C."/>
            <person name="Nakamura Y."/>
            <person name="Masui N."/>
            <person name="Fuji F."/>
            <person name="Takaki Y."/>
            <person name="Inoue A."/>
            <person name="Horikoshi K."/>
        </authorList>
    </citation>
    <scope>NUCLEOTIDE SEQUENCE [GENOMIC DNA]</scope>
    <source>
        <strain>ATCC BAA-125 / DSM 18197 / FERM 7344 / JCM 9153 / C-125</strain>
    </source>
</reference>
<reference key="2">
    <citation type="journal article" date="2000" name="Nucleic Acids Res.">
        <title>Complete genome sequence of the alkaliphilic bacterium Bacillus halodurans and genomic sequence comparison with Bacillus subtilis.</title>
        <authorList>
            <person name="Takami H."/>
            <person name="Nakasone K."/>
            <person name="Takaki Y."/>
            <person name="Maeno G."/>
            <person name="Sasaki R."/>
            <person name="Masui N."/>
            <person name="Fuji F."/>
            <person name="Hirama C."/>
            <person name="Nakamura Y."/>
            <person name="Ogasawara N."/>
            <person name="Kuhara S."/>
            <person name="Horikoshi K."/>
        </authorList>
    </citation>
    <scope>NUCLEOTIDE SEQUENCE [LARGE SCALE GENOMIC DNA]</scope>
    <source>
        <strain>ATCC BAA-125 / DSM 18197 / FERM 7344 / JCM 9153 / C-125</strain>
    </source>
</reference>
<dbReference type="EMBL" id="AB011838">
    <property type="protein sequence ID" value="BAA75353.1"/>
    <property type="status" value="ALT_FRAME"/>
    <property type="molecule type" value="Genomic_DNA"/>
</dbReference>
<dbReference type="EMBL" id="BA000004">
    <property type="protein sequence ID" value="BAB07633.1"/>
    <property type="molecule type" value="Genomic_DNA"/>
</dbReference>
<dbReference type="PIR" id="B84139">
    <property type="entry name" value="B84139"/>
</dbReference>
<dbReference type="RefSeq" id="WP_010900039.1">
    <property type="nucleotide sequence ID" value="NC_002570.2"/>
</dbReference>
<dbReference type="SMR" id="Q9K618"/>
<dbReference type="STRING" id="272558.gene:10729827"/>
<dbReference type="KEGG" id="bha:BH3914"/>
<dbReference type="eggNOG" id="COG0577">
    <property type="taxonomic scope" value="Bacteria"/>
</dbReference>
<dbReference type="HOGENOM" id="CLU_022800_2_1_9"/>
<dbReference type="OrthoDB" id="1705903at2"/>
<dbReference type="Proteomes" id="UP000001258">
    <property type="component" value="Chromosome"/>
</dbReference>
<dbReference type="GO" id="GO:0005886">
    <property type="term" value="C:plasma membrane"/>
    <property type="evidence" value="ECO:0007669"/>
    <property type="project" value="UniProtKB-SubCell"/>
</dbReference>
<dbReference type="GO" id="GO:0046677">
    <property type="term" value="P:response to antibiotic"/>
    <property type="evidence" value="ECO:0007669"/>
    <property type="project" value="UniProtKB-KW"/>
</dbReference>
<dbReference type="GO" id="GO:0055085">
    <property type="term" value="P:transmembrane transport"/>
    <property type="evidence" value="ECO:0007669"/>
    <property type="project" value="InterPro"/>
</dbReference>
<dbReference type="InterPro" id="IPR052536">
    <property type="entry name" value="ABC-4_Integral_Memb_Prot"/>
</dbReference>
<dbReference type="InterPro" id="IPR003838">
    <property type="entry name" value="ABC3_permease_C"/>
</dbReference>
<dbReference type="InterPro" id="IPR027022">
    <property type="entry name" value="ABC_permease_BceB-typ"/>
</dbReference>
<dbReference type="PANTHER" id="PTHR46795:SF3">
    <property type="entry name" value="ABC TRANSPORTER PERMEASE"/>
    <property type="match status" value="1"/>
</dbReference>
<dbReference type="PANTHER" id="PTHR46795">
    <property type="entry name" value="ABC TRANSPORTER PERMEASE-RELATED-RELATED"/>
    <property type="match status" value="1"/>
</dbReference>
<dbReference type="Pfam" id="PF02687">
    <property type="entry name" value="FtsX"/>
    <property type="match status" value="1"/>
</dbReference>
<dbReference type="PIRSF" id="PIRSF018968">
    <property type="entry name" value="ABC_permease_BceB"/>
    <property type="match status" value="1"/>
</dbReference>
<organism>
    <name type="scientific">Halalkalibacterium halodurans (strain ATCC BAA-125 / DSM 18197 / FERM 7344 / JCM 9153 / C-125)</name>
    <name type="common">Bacillus halodurans</name>
    <dbReference type="NCBI Taxonomy" id="272558"/>
    <lineage>
        <taxon>Bacteria</taxon>
        <taxon>Bacillati</taxon>
        <taxon>Bacillota</taxon>
        <taxon>Bacilli</taxon>
        <taxon>Bacillales</taxon>
        <taxon>Bacillaceae</taxon>
        <taxon>Halalkalibacterium (ex Joshi et al. 2022)</taxon>
    </lineage>
</organism>
<accession>Q9K618</accession>
<accession>Q9Z9S9</accession>
<name>BCEB_HALH5</name>